<accession>Q68W82</accession>
<evidence type="ECO:0000255" key="1">
    <source>
        <dbReference type="HAMAP-Rule" id="MF_00531"/>
    </source>
</evidence>
<evidence type="ECO:0000305" key="2"/>
<proteinExistence type="inferred from homology"/>
<feature type="chain" id="PRO_0000129893" description="Small ribosomal subunit protein uS19">
    <location>
        <begin position="1"/>
        <end position="92"/>
    </location>
</feature>
<comment type="function">
    <text evidence="1">Protein S19 forms a complex with S13 that binds strongly to the 16S ribosomal RNA.</text>
</comment>
<comment type="similarity">
    <text evidence="1">Belongs to the universal ribosomal protein uS19 family.</text>
</comment>
<organism>
    <name type="scientific">Rickettsia typhi (strain ATCC VR-144 / Wilmington)</name>
    <dbReference type="NCBI Taxonomy" id="257363"/>
    <lineage>
        <taxon>Bacteria</taxon>
        <taxon>Pseudomonadati</taxon>
        <taxon>Pseudomonadota</taxon>
        <taxon>Alphaproteobacteria</taxon>
        <taxon>Rickettsiales</taxon>
        <taxon>Rickettsiaceae</taxon>
        <taxon>Rickettsieae</taxon>
        <taxon>Rickettsia</taxon>
        <taxon>typhus group</taxon>
    </lineage>
</organism>
<protein>
    <recommendedName>
        <fullName evidence="1">Small ribosomal subunit protein uS19</fullName>
    </recommendedName>
    <alternativeName>
        <fullName evidence="2">30S ribosomal protein S19</fullName>
    </alternativeName>
</protein>
<sequence length="92" mass="10586">MARSIWKGPFVDGYLIKKVQKLMKSGKSEMIKTWSRRSTILPLFVGFTFSVHNGNKFIPVYINEEMVGRKLGEFAPTRTFHGHGADKKVKRK</sequence>
<reference key="1">
    <citation type="journal article" date="2004" name="J. Bacteriol.">
        <title>Complete genome sequence of Rickettsia typhi and comparison with sequences of other Rickettsiae.</title>
        <authorList>
            <person name="McLeod M.P."/>
            <person name="Qin X."/>
            <person name="Karpathy S.E."/>
            <person name="Gioia J."/>
            <person name="Highlander S.K."/>
            <person name="Fox G.E."/>
            <person name="McNeill T.Z."/>
            <person name="Jiang H."/>
            <person name="Muzny D."/>
            <person name="Jacob L.S."/>
            <person name="Hawes A.C."/>
            <person name="Sodergren E."/>
            <person name="Gill R."/>
            <person name="Hume J."/>
            <person name="Morgan M."/>
            <person name="Fan G."/>
            <person name="Amin A.G."/>
            <person name="Gibbs R.A."/>
            <person name="Hong C."/>
            <person name="Yu X.-J."/>
            <person name="Walker D.H."/>
            <person name="Weinstock G.M."/>
        </authorList>
    </citation>
    <scope>NUCLEOTIDE SEQUENCE [LARGE SCALE GENOMIC DNA]</scope>
    <source>
        <strain>ATCC VR-144 / Wilmington</strain>
    </source>
</reference>
<dbReference type="EMBL" id="AE017197">
    <property type="protein sequence ID" value="AAU04110.1"/>
    <property type="molecule type" value="Genomic_DNA"/>
</dbReference>
<dbReference type="RefSeq" id="WP_011191087.1">
    <property type="nucleotide sequence ID" value="NC_006142.1"/>
</dbReference>
<dbReference type="SMR" id="Q68W82"/>
<dbReference type="KEGG" id="rty:RT0647"/>
<dbReference type="eggNOG" id="COG0185">
    <property type="taxonomic scope" value="Bacteria"/>
</dbReference>
<dbReference type="HOGENOM" id="CLU_144911_0_1_5"/>
<dbReference type="OrthoDB" id="9797833at2"/>
<dbReference type="Proteomes" id="UP000000604">
    <property type="component" value="Chromosome"/>
</dbReference>
<dbReference type="GO" id="GO:0005737">
    <property type="term" value="C:cytoplasm"/>
    <property type="evidence" value="ECO:0007669"/>
    <property type="project" value="UniProtKB-ARBA"/>
</dbReference>
<dbReference type="GO" id="GO:0015935">
    <property type="term" value="C:small ribosomal subunit"/>
    <property type="evidence" value="ECO:0007669"/>
    <property type="project" value="InterPro"/>
</dbReference>
<dbReference type="GO" id="GO:0019843">
    <property type="term" value="F:rRNA binding"/>
    <property type="evidence" value="ECO:0007669"/>
    <property type="project" value="UniProtKB-UniRule"/>
</dbReference>
<dbReference type="GO" id="GO:0003735">
    <property type="term" value="F:structural constituent of ribosome"/>
    <property type="evidence" value="ECO:0007669"/>
    <property type="project" value="InterPro"/>
</dbReference>
<dbReference type="GO" id="GO:0000028">
    <property type="term" value="P:ribosomal small subunit assembly"/>
    <property type="evidence" value="ECO:0007669"/>
    <property type="project" value="TreeGrafter"/>
</dbReference>
<dbReference type="GO" id="GO:0006412">
    <property type="term" value="P:translation"/>
    <property type="evidence" value="ECO:0007669"/>
    <property type="project" value="UniProtKB-UniRule"/>
</dbReference>
<dbReference type="FunFam" id="3.30.860.10:FF:000001">
    <property type="entry name" value="30S ribosomal protein S19"/>
    <property type="match status" value="1"/>
</dbReference>
<dbReference type="Gene3D" id="3.30.860.10">
    <property type="entry name" value="30s Ribosomal Protein S19, Chain A"/>
    <property type="match status" value="1"/>
</dbReference>
<dbReference type="HAMAP" id="MF_00531">
    <property type="entry name" value="Ribosomal_uS19"/>
    <property type="match status" value="1"/>
</dbReference>
<dbReference type="InterPro" id="IPR002222">
    <property type="entry name" value="Ribosomal_uS19"/>
</dbReference>
<dbReference type="InterPro" id="IPR005732">
    <property type="entry name" value="Ribosomal_uS19_bac-type"/>
</dbReference>
<dbReference type="InterPro" id="IPR020934">
    <property type="entry name" value="Ribosomal_uS19_CS"/>
</dbReference>
<dbReference type="InterPro" id="IPR023575">
    <property type="entry name" value="Ribosomal_uS19_SF"/>
</dbReference>
<dbReference type="NCBIfam" id="TIGR01050">
    <property type="entry name" value="rpsS_bact"/>
    <property type="match status" value="1"/>
</dbReference>
<dbReference type="PANTHER" id="PTHR11880">
    <property type="entry name" value="RIBOSOMAL PROTEIN S19P FAMILY MEMBER"/>
    <property type="match status" value="1"/>
</dbReference>
<dbReference type="PANTHER" id="PTHR11880:SF8">
    <property type="entry name" value="SMALL RIBOSOMAL SUBUNIT PROTEIN US19M"/>
    <property type="match status" value="1"/>
</dbReference>
<dbReference type="Pfam" id="PF00203">
    <property type="entry name" value="Ribosomal_S19"/>
    <property type="match status" value="1"/>
</dbReference>
<dbReference type="PIRSF" id="PIRSF002144">
    <property type="entry name" value="Ribosomal_S19"/>
    <property type="match status" value="1"/>
</dbReference>
<dbReference type="PRINTS" id="PR00975">
    <property type="entry name" value="RIBOSOMALS19"/>
</dbReference>
<dbReference type="SUPFAM" id="SSF54570">
    <property type="entry name" value="Ribosomal protein S19"/>
    <property type="match status" value="1"/>
</dbReference>
<dbReference type="PROSITE" id="PS00323">
    <property type="entry name" value="RIBOSOMAL_S19"/>
    <property type="match status" value="1"/>
</dbReference>
<name>RS19_RICTY</name>
<gene>
    <name evidence="1" type="primary">rpsS</name>
    <name type="ordered locus">RT0647</name>
</gene>
<keyword id="KW-0687">Ribonucleoprotein</keyword>
<keyword id="KW-0689">Ribosomal protein</keyword>
<keyword id="KW-0694">RNA-binding</keyword>
<keyword id="KW-0699">rRNA-binding</keyword>